<protein>
    <recommendedName>
        <fullName>Transcriptional adapter 3</fullName>
    </recommendedName>
    <alternativeName>
        <fullName>ADA3 homolog</fullName>
        <shortName>mADA3</shortName>
    </alternativeName>
    <alternativeName>
        <fullName>Transcriptional adapter 3-like</fullName>
        <shortName>ADA3-like protein</shortName>
    </alternativeName>
</protein>
<name>TADA3_MOUSE</name>
<comment type="function">
    <text evidence="1">Functions as a component of the PCAF complex. The PCAF complex is capable of efficiently acetylating histones in a nucleosomal context. The PCAF complex could be considered as the human version of the yeast SAGA complex. Also known as a coactivator for p53/TP53-dependent transcriptional activation (By similarity). Component of the ATAC complex, a complex with histone acetyltransferase activity on histones H3 and H4 (By similarity).</text>
</comment>
<comment type="subunit">
    <text evidence="1">The PCAF complex is composed of a number of TBP-associated factors (TAFS), such as TAF5, TAF5L, TAF6, TAF6L, TAF9, TAF10 and TAF12, PCAF, and also PCAF-associated factors (PAFs), such as TADA2L/ADA2, TADA3L/ADA3 and SPT3. Interacts directly with TADA2L and PCAF and also with the high-risk HPV oncoprotein E6. Component of the STAGA transcription coactivator-HAT complex, at least composed of SUPT3H, GCN5L2, TAF5L, TAF6L, SUPT7L, TADA3L, TAD1L, TAF10, TAF12, TRRAP and TAF9. Component of the TFTC-HAT complex (By similarity). Component of the ADA2A-containing complex (ATAC), composed of KAT14, KAT2A, TADA2L, TADA3L, ZZ3, MBIP, WDR5, YEATS2, CCDC101 and DR1 (By similarity).</text>
</comment>
<comment type="subcellular location">
    <subcellularLocation>
        <location evidence="1">Nucleus</location>
    </subcellularLocation>
</comment>
<comment type="alternative products">
    <event type="alternative splicing"/>
    <isoform>
        <id>Q8R0L9-1</id>
        <name>1</name>
        <sequence type="displayed"/>
    </isoform>
    <isoform>
        <id>Q8R0L9-2</id>
        <name>2</name>
        <sequence type="described" ref="VSP_009740"/>
    </isoform>
    <isoform>
        <id>Q8R0L9-3</id>
        <name>3</name>
        <sequence type="described" ref="VSP_009741"/>
    </isoform>
</comment>
<comment type="similarity">
    <text evidence="7">Belongs to the NGG1 family.</text>
</comment>
<proteinExistence type="evidence at protein level"/>
<evidence type="ECO:0000250" key="1"/>
<evidence type="ECO:0000250" key="2">
    <source>
        <dbReference type="UniProtKB" id="O75528"/>
    </source>
</evidence>
<evidence type="ECO:0000255" key="3"/>
<evidence type="ECO:0000256" key="4">
    <source>
        <dbReference type="SAM" id="MobiDB-lite"/>
    </source>
</evidence>
<evidence type="ECO:0000303" key="5">
    <source>
    </source>
</evidence>
<evidence type="ECO:0000303" key="6">
    <source>
    </source>
</evidence>
<evidence type="ECO:0000305" key="7"/>
<accession>Q8R0L9</accession>
<accession>Q8CIH4</accession>
<accession>Q8K289</accession>
<accession>Q8R5E3</accession>
<accession>Q9CTJ0</accession>
<keyword id="KW-0007">Acetylation</keyword>
<keyword id="KW-0025">Alternative splicing</keyword>
<keyword id="KW-0175">Coiled coil</keyword>
<keyword id="KW-1017">Isopeptide bond</keyword>
<keyword id="KW-0539">Nucleus</keyword>
<keyword id="KW-0597">Phosphoprotein</keyword>
<keyword id="KW-1185">Reference proteome</keyword>
<keyword id="KW-0804">Transcription</keyword>
<keyword id="KW-0805">Transcription regulation</keyword>
<keyword id="KW-0832">Ubl conjugation</keyword>
<feature type="chain" id="PRO_0000072417" description="Transcriptional adapter 3">
    <location>
        <begin position="1"/>
        <end position="432"/>
    </location>
</feature>
<feature type="region of interest" description="Disordered" evidence="4">
    <location>
        <begin position="87"/>
        <end position="127"/>
    </location>
</feature>
<feature type="region of interest" description="Disordered" evidence="4">
    <location>
        <begin position="272"/>
        <end position="319"/>
    </location>
</feature>
<feature type="coiled-coil region" evidence="3">
    <location>
        <begin position="40"/>
        <end position="69"/>
    </location>
</feature>
<feature type="coiled-coil region" evidence="3">
    <location>
        <begin position="367"/>
        <end position="407"/>
    </location>
</feature>
<feature type="compositionally biased region" description="Polar residues" evidence="4">
    <location>
        <begin position="295"/>
        <end position="305"/>
    </location>
</feature>
<feature type="modified residue" description="Phosphoserine" evidence="2">
    <location>
        <position position="280"/>
    </location>
</feature>
<feature type="modified residue" description="Phosphoserine" evidence="2">
    <location>
        <position position="298"/>
    </location>
</feature>
<feature type="modified residue" description="N6-acetyllysine" evidence="2">
    <location>
        <position position="418"/>
    </location>
</feature>
<feature type="cross-link" description="Glycyl lysine isopeptide (Lys-Gly) (interchain with G-Cter in SUMO2)" evidence="2">
    <location>
        <position position="21"/>
    </location>
</feature>
<feature type="cross-link" description="Glycyl lysine isopeptide (Lys-Gly) (interchain with G-Cter in SUMO2)" evidence="2">
    <location>
        <position position="129"/>
    </location>
</feature>
<feature type="splice variant" id="VSP_009741" description="In isoform 3." evidence="5">
    <location>
        <begin position="157"/>
        <end position="432"/>
    </location>
</feature>
<feature type="splice variant" id="VSP_009740" description="In isoform 2." evidence="5 6">
    <location>
        <begin position="170"/>
        <end position="188"/>
    </location>
</feature>
<feature type="sequence conflict" description="In Ref. 3; AAH22707." evidence="7" ref="3">
    <location>
        <begin position="1"/>
        <end position="200"/>
    </location>
</feature>
<feature type="sequence conflict" description="In Ref. 3; AAH22707." evidence="7" ref="3">
    <original>A</original>
    <variation>M</variation>
    <location>
        <position position="201"/>
    </location>
</feature>
<feature type="sequence conflict" description="In Ref. 2; BAB22769." evidence="7" ref="2">
    <original>V</original>
    <variation>S</variation>
    <location>
        <position position="391"/>
    </location>
</feature>
<gene>
    <name type="primary">Tada3</name>
    <name type="synonym">Ada3</name>
    <name type="synonym">Tada3l</name>
</gene>
<dbReference type="EMBL" id="AF383154">
    <property type="protein sequence ID" value="AAM21463.1"/>
    <property type="molecule type" value="mRNA"/>
</dbReference>
<dbReference type="EMBL" id="AK003405">
    <property type="protein sequence ID" value="BAB22769.1"/>
    <property type="molecule type" value="mRNA"/>
</dbReference>
<dbReference type="EMBL" id="AK078906">
    <property type="protein sequence ID" value="BAC37451.1"/>
    <property type="molecule type" value="mRNA"/>
</dbReference>
<dbReference type="EMBL" id="BC022707">
    <property type="protein sequence ID" value="AAH22707.1"/>
    <property type="molecule type" value="mRNA"/>
</dbReference>
<dbReference type="EMBL" id="BC023879">
    <property type="protein sequence ID" value="AAH23879.1"/>
    <property type="molecule type" value="mRNA"/>
</dbReference>
<dbReference type="EMBL" id="BC026630">
    <property type="protein sequence ID" value="AAH26630.1"/>
    <property type="molecule type" value="mRNA"/>
</dbReference>
<dbReference type="EMBL" id="BC032195">
    <property type="protein sequence ID" value="AAH32195.1"/>
    <property type="molecule type" value="mRNA"/>
</dbReference>
<dbReference type="CCDS" id="CCDS20416.1">
    <molecule id="Q8R0L9-1"/>
</dbReference>
<dbReference type="RefSeq" id="NP_598693.1">
    <molecule id="Q8R0L9-1"/>
    <property type="nucleotide sequence ID" value="NM_133932.3"/>
</dbReference>
<dbReference type="SMR" id="Q8R0L9"/>
<dbReference type="BioGRID" id="221609">
    <property type="interactions" value="5"/>
</dbReference>
<dbReference type="ComplexPortal" id="CPX-1024">
    <property type="entry name" value="PCAF histone acetylase complex"/>
</dbReference>
<dbReference type="ComplexPortal" id="CPX-1025">
    <property type="entry name" value="GCN5-containing ATAC complex"/>
</dbReference>
<dbReference type="ComplexPortal" id="CPX-1029">
    <property type="entry name" value="PCAF-containing ATAC complex"/>
</dbReference>
<dbReference type="ComplexPortal" id="CPX-6803">
    <property type="entry name" value="SAGA complex, KAT2B variant"/>
</dbReference>
<dbReference type="ComplexPortal" id="CPX-916">
    <property type="entry name" value="TFTC histone acetylation complex"/>
</dbReference>
<dbReference type="ComplexPortal" id="CPX-920">
    <property type="entry name" value="SAGA complex, KAT2A variant"/>
</dbReference>
<dbReference type="FunCoup" id="Q8R0L9">
    <property type="interactions" value="3796"/>
</dbReference>
<dbReference type="IntAct" id="Q8R0L9">
    <property type="interactions" value="3"/>
</dbReference>
<dbReference type="MINT" id="Q8R0L9"/>
<dbReference type="STRING" id="10090.ENSMUSP00000032410"/>
<dbReference type="iPTMnet" id="Q8R0L9"/>
<dbReference type="PhosphoSitePlus" id="Q8R0L9"/>
<dbReference type="PaxDb" id="10090-ENSMUSP00000032410"/>
<dbReference type="PeptideAtlas" id="Q8R0L9"/>
<dbReference type="ProteomicsDB" id="259343">
    <molecule id="Q8R0L9-1"/>
</dbReference>
<dbReference type="ProteomicsDB" id="259344">
    <molecule id="Q8R0L9-2"/>
</dbReference>
<dbReference type="ProteomicsDB" id="259345">
    <molecule id="Q8R0L9-3"/>
</dbReference>
<dbReference type="Pumba" id="Q8R0L9"/>
<dbReference type="Antibodypedia" id="10290">
    <property type="antibodies" value="247 antibodies from 28 providers"/>
</dbReference>
<dbReference type="DNASU" id="101206"/>
<dbReference type="Ensembl" id="ENSMUST00000032410.14">
    <molecule id="Q8R0L9-1"/>
    <property type="protein sequence ID" value="ENSMUSP00000032410.8"/>
    <property type="gene ID" value="ENSMUSG00000048930.13"/>
</dbReference>
<dbReference type="Ensembl" id="ENSMUST00000043333.9">
    <molecule id="Q8R0L9-2"/>
    <property type="protein sequence ID" value="ENSMUSP00000043363.3"/>
    <property type="gene ID" value="ENSMUSG00000048930.13"/>
</dbReference>
<dbReference type="GeneID" id="101206"/>
<dbReference type="KEGG" id="mmu:101206"/>
<dbReference type="UCSC" id="uc009dfn.2">
    <molecule id="Q8R0L9-1"/>
    <property type="organism name" value="mouse"/>
</dbReference>
<dbReference type="UCSC" id="uc009dfp.2">
    <molecule id="Q8R0L9-2"/>
    <property type="organism name" value="mouse"/>
</dbReference>
<dbReference type="AGR" id="MGI:1915724"/>
<dbReference type="CTD" id="10474"/>
<dbReference type="MGI" id="MGI:1915724">
    <property type="gene designation" value="Tada3"/>
</dbReference>
<dbReference type="VEuPathDB" id="HostDB:ENSMUSG00000048930"/>
<dbReference type="eggNOG" id="KOG4191">
    <property type="taxonomic scope" value="Eukaryota"/>
</dbReference>
<dbReference type="GeneTree" id="ENSGT00390000008947"/>
<dbReference type="HOGENOM" id="CLU_038515_0_0_1"/>
<dbReference type="InParanoid" id="Q8R0L9"/>
<dbReference type="OMA" id="TPNKFWA"/>
<dbReference type="OrthoDB" id="1232at2759"/>
<dbReference type="PhylomeDB" id="Q8R0L9"/>
<dbReference type="TreeFam" id="TF323397"/>
<dbReference type="Reactome" id="R-MMU-5689880">
    <property type="pathway name" value="Ub-specific processing proteases"/>
</dbReference>
<dbReference type="Reactome" id="R-MMU-9772755">
    <property type="pathway name" value="Formation of WDR5-containing histone-modifying complexes"/>
</dbReference>
<dbReference type="BioGRID-ORCS" id="101206">
    <property type="hits" value="17 hits in 84 CRISPR screens"/>
</dbReference>
<dbReference type="CD-CODE" id="01CA17F3">
    <property type="entry name" value="Centrosome"/>
</dbReference>
<dbReference type="ChiTaRS" id="Tada3">
    <property type="organism name" value="mouse"/>
</dbReference>
<dbReference type="PRO" id="PR:Q8R0L9"/>
<dbReference type="Proteomes" id="UP000000589">
    <property type="component" value="Chromosome 6"/>
</dbReference>
<dbReference type="RNAct" id="Q8R0L9">
    <property type="molecule type" value="protein"/>
</dbReference>
<dbReference type="Bgee" id="ENSMUSG00000048930">
    <property type="expression patterns" value="Expressed in animal zygote and 247 other cell types or tissues"/>
</dbReference>
<dbReference type="ExpressionAtlas" id="Q8R0L9">
    <property type="expression patterns" value="baseline and differential"/>
</dbReference>
<dbReference type="GO" id="GO:0140672">
    <property type="term" value="C:ATAC complex"/>
    <property type="evidence" value="ECO:0000314"/>
    <property type="project" value="MGI"/>
</dbReference>
<dbReference type="GO" id="GO:0072686">
    <property type="term" value="C:mitotic spindle"/>
    <property type="evidence" value="ECO:0000314"/>
    <property type="project" value="MGI"/>
</dbReference>
<dbReference type="GO" id="GO:0005634">
    <property type="term" value="C:nucleus"/>
    <property type="evidence" value="ECO:0000314"/>
    <property type="project" value="MGI"/>
</dbReference>
<dbReference type="GO" id="GO:0000124">
    <property type="term" value="C:SAGA complex"/>
    <property type="evidence" value="ECO:0000314"/>
    <property type="project" value="MGI"/>
</dbReference>
<dbReference type="GO" id="GO:0033276">
    <property type="term" value="C:transcription factor TFTC complex"/>
    <property type="evidence" value="ECO:0000303"/>
    <property type="project" value="ComplexPortal"/>
</dbReference>
<dbReference type="GO" id="GO:0016922">
    <property type="term" value="F:nuclear receptor binding"/>
    <property type="evidence" value="ECO:0007669"/>
    <property type="project" value="Ensembl"/>
</dbReference>
<dbReference type="GO" id="GO:0019904">
    <property type="term" value="F:protein domain specific binding"/>
    <property type="evidence" value="ECO:0007669"/>
    <property type="project" value="Ensembl"/>
</dbReference>
<dbReference type="GO" id="GO:0003713">
    <property type="term" value="F:transcription coactivator activity"/>
    <property type="evidence" value="ECO:0000314"/>
    <property type="project" value="MGI"/>
</dbReference>
<dbReference type="GO" id="GO:0006325">
    <property type="term" value="P:chromatin organization"/>
    <property type="evidence" value="ECO:0000316"/>
    <property type="project" value="MGI"/>
</dbReference>
<dbReference type="GO" id="GO:0000278">
    <property type="term" value="P:mitotic cell cycle"/>
    <property type="evidence" value="ECO:0000315"/>
    <property type="project" value="MGI"/>
</dbReference>
<dbReference type="GO" id="GO:0000122">
    <property type="term" value="P:negative regulation of transcription by RNA polymerase II"/>
    <property type="evidence" value="ECO:0007669"/>
    <property type="project" value="Ensembl"/>
</dbReference>
<dbReference type="GO" id="GO:0045893">
    <property type="term" value="P:positive regulation of DNA-templated transcription"/>
    <property type="evidence" value="ECO:0000303"/>
    <property type="project" value="ComplexPortal"/>
</dbReference>
<dbReference type="GO" id="GO:0010628">
    <property type="term" value="P:positive regulation of gene expression"/>
    <property type="evidence" value="ECO:0007669"/>
    <property type="project" value="Ensembl"/>
</dbReference>
<dbReference type="GO" id="GO:0051726">
    <property type="term" value="P:regulation of cell cycle"/>
    <property type="evidence" value="ECO:0000315"/>
    <property type="project" value="ComplexPortal"/>
</dbReference>
<dbReference type="GO" id="GO:0051302">
    <property type="term" value="P:regulation of cell division"/>
    <property type="evidence" value="ECO:0000314"/>
    <property type="project" value="ComplexPortal"/>
</dbReference>
<dbReference type="GO" id="GO:0006282">
    <property type="term" value="P:regulation of DNA repair"/>
    <property type="evidence" value="ECO:0000303"/>
    <property type="project" value="ComplexPortal"/>
</dbReference>
<dbReference type="GO" id="GO:0006355">
    <property type="term" value="P:regulation of DNA-templated transcription"/>
    <property type="evidence" value="ECO:0000266"/>
    <property type="project" value="ComplexPortal"/>
</dbReference>
<dbReference type="GO" id="GO:0045995">
    <property type="term" value="P:regulation of embryonic development"/>
    <property type="evidence" value="ECO:0000314"/>
    <property type="project" value="ComplexPortal"/>
</dbReference>
<dbReference type="GO" id="GO:0031647">
    <property type="term" value="P:regulation of protein stability"/>
    <property type="evidence" value="ECO:0000315"/>
    <property type="project" value="MGI"/>
</dbReference>
<dbReference type="GO" id="GO:0043484">
    <property type="term" value="P:regulation of RNA splicing"/>
    <property type="evidence" value="ECO:0000303"/>
    <property type="project" value="ComplexPortal"/>
</dbReference>
<dbReference type="GO" id="GO:0006357">
    <property type="term" value="P:regulation of transcription by RNA polymerase II"/>
    <property type="evidence" value="ECO:0000266"/>
    <property type="project" value="ComplexPortal"/>
</dbReference>
<dbReference type="InterPro" id="IPR019340">
    <property type="entry name" value="Histone_AcTrfase_su3"/>
</dbReference>
<dbReference type="PANTHER" id="PTHR13556:SF2">
    <property type="entry name" value="TRANSCRIPTIONAL ADAPTER 3"/>
    <property type="match status" value="1"/>
</dbReference>
<dbReference type="PANTHER" id="PTHR13556">
    <property type="entry name" value="TRANSCRIPTIONAL ADAPTER 3-RELATED"/>
    <property type="match status" value="1"/>
</dbReference>
<dbReference type="Pfam" id="PF10198">
    <property type="entry name" value="Ada3"/>
    <property type="match status" value="1"/>
</dbReference>
<sequence length="432" mass="48900">MSELKDCPLQFHDFKSVDHLKVCPRYTAVLARSEDDGIGIEELDTLQLELETLLSSASRRLRVLEAETQILTDWQDKKGDRRFLKLGRDHELGAPPKHGKPKKQKLEGKTGHGPGPGPGRPKSKNVQPKIQEYEFTDDPIDVPRIPKNDAPNRFWASVEPYCADITSEEVRTLEELLKPPEDEAEHYKIPPLGKHYSQRWAQEDLLEEQKDGARAAAVADKKKGLIGPLTELDTKDVDALLKKSEAQHEQPEDGCPFGALTQRLLQALVEENIISPMEDSPIPDMSGKESGADGASTSPRNQNKPFSVPHTKSLESRIKEELIAQGLLESEDRPAEDSEDEVLAELRKRQAELKALSAHNRTKKHDLLRLAKEEVSRQELRQRVRMADNEVMDAFRKIMAARQKKRTPTKKEKDQAWKTLKERESILKLLDG</sequence>
<organism>
    <name type="scientific">Mus musculus</name>
    <name type="common">Mouse</name>
    <dbReference type="NCBI Taxonomy" id="10090"/>
    <lineage>
        <taxon>Eukaryota</taxon>
        <taxon>Metazoa</taxon>
        <taxon>Chordata</taxon>
        <taxon>Craniata</taxon>
        <taxon>Vertebrata</taxon>
        <taxon>Euteleostomi</taxon>
        <taxon>Mammalia</taxon>
        <taxon>Eutheria</taxon>
        <taxon>Euarchontoglires</taxon>
        <taxon>Glires</taxon>
        <taxon>Rodentia</taxon>
        <taxon>Myomorpha</taxon>
        <taxon>Muroidea</taxon>
        <taxon>Muridae</taxon>
        <taxon>Murinae</taxon>
        <taxon>Mus</taxon>
        <taxon>Mus</taxon>
    </lineage>
</organism>
<reference key="1">
    <citation type="journal article" date="2002" name="Nucleic Acids Res.">
        <title>ADA3-containing complexes associate with estrogen receptor alpha.</title>
        <authorList>
            <person name="Benecke A."/>
            <person name="Gaudon C."/>
            <person name="Garnier J.-M."/>
            <person name="vom Baur E."/>
            <person name="Chambon P."/>
            <person name="Losson R."/>
        </authorList>
    </citation>
    <scope>NUCLEOTIDE SEQUENCE [MRNA] (ISOFORM 1)</scope>
    <scope>INTERACTION OF TADA3L/ADA3-CONTAINING COMPLEXES WITH ESR1</scope>
</reference>
<reference key="2">
    <citation type="journal article" date="2005" name="Science">
        <title>The transcriptional landscape of the mammalian genome.</title>
        <authorList>
            <person name="Carninci P."/>
            <person name="Kasukawa T."/>
            <person name="Katayama S."/>
            <person name="Gough J."/>
            <person name="Frith M.C."/>
            <person name="Maeda N."/>
            <person name="Oyama R."/>
            <person name="Ravasi T."/>
            <person name="Lenhard B."/>
            <person name="Wells C."/>
            <person name="Kodzius R."/>
            <person name="Shimokawa K."/>
            <person name="Bajic V.B."/>
            <person name="Brenner S.E."/>
            <person name="Batalov S."/>
            <person name="Forrest A.R."/>
            <person name="Zavolan M."/>
            <person name="Davis M.J."/>
            <person name="Wilming L.G."/>
            <person name="Aidinis V."/>
            <person name="Allen J.E."/>
            <person name="Ambesi-Impiombato A."/>
            <person name="Apweiler R."/>
            <person name="Aturaliya R.N."/>
            <person name="Bailey T.L."/>
            <person name="Bansal M."/>
            <person name="Baxter L."/>
            <person name="Beisel K.W."/>
            <person name="Bersano T."/>
            <person name="Bono H."/>
            <person name="Chalk A.M."/>
            <person name="Chiu K.P."/>
            <person name="Choudhary V."/>
            <person name="Christoffels A."/>
            <person name="Clutterbuck D.R."/>
            <person name="Crowe M.L."/>
            <person name="Dalla E."/>
            <person name="Dalrymple B.P."/>
            <person name="de Bono B."/>
            <person name="Della Gatta G."/>
            <person name="di Bernardo D."/>
            <person name="Down T."/>
            <person name="Engstrom P."/>
            <person name="Fagiolini M."/>
            <person name="Faulkner G."/>
            <person name="Fletcher C.F."/>
            <person name="Fukushima T."/>
            <person name="Furuno M."/>
            <person name="Futaki S."/>
            <person name="Gariboldi M."/>
            <person name="Georgii-Hemming P."/>
            <person name="Gingeras T.R."/>
            <person name="Gojobori T."/>
            <person name="Green R.E."/>
            <person name="Gustincich S."/>
            <person name="Harbers M."/>
            <person name="Hayashi Y."/>
            <person name="Hensch T.K."/>
            <person name="Hirokawa N."/>
            <person name="Hill D."/>
            <person name="Huminiecki L."/>
            <person name="Iacono M."/>
            <person name="Ikeo K."/>
            <person name="Iwama A."/>
            <person name="Ishikawa T."/>
            <person name="Jakt M."/>
            <person name="Kanapin A."/>
            <person name="Katoh M."/>
            <person name="Kawasawa Y."/>
            <person name="Kelso J."/>
            <person name="Kitamura H."/>
            <person name="Kitano H."/>
            <person name="Kollias G."/>
            <person name="Krishnan S.P."/>
            <person name="Kruger A."/>
            <person name="Kummerfeld S.K."/>
            <person name="Kurochkin I.V."/>
            <person name="Lareau L.F."/>
            <person name="Lazarevic D."/>
            <person name="Lipovich L."/>
            <person name="Liu J."/>
            <person name="Liuni S."/>
            <person name="McWilliam S."/>
            <person name="Madan Babu M."/>
            <person name="Madera M."/>
            <person name="Marchionni L."/>
            <person name="Matsuda H."/>
            <person name="Matsuzawa S."/>
            <person name="Miki H."/>
            <person name="Mignone F."/>
            <person name="Miyake S."/>
            <person name="Morris K."/>
            <person name="Mottagui-Tabar S."/>
            <person name="Mulder N."/>
            <person name="Nakano N."/>
            <person name="Nakauchi H."/>
            <person name="Ng P."/>
            <person name="Nilsson R."/>
            <person name="Nishiguchi S."/>
            <person name="Nishikawa S."/>
            <person name="Nori F."/>
            <person name="Ohara O."/>
            <person name="Okazaki Y."/>
            <person name="Orlando V."/>
            <person name="Pang K.C."/>
            <person name="Pavan W.J."/>
            <person name="Pavesi G."/>
            <person name="Pesole G."/>
            <person name="Petrovsky N."/>
            <person name="Piazza S."/>
            <person name="Reed J."/>
            <person name="Reid J.F."/>
            <person name="Ring B.Z."/>
            <person name="Ringwald M."/>
            <person name="Rost B."/>
            <person name="Ruan Y."/>
            <person name="Salzberg S.L."/>
            <person name="Sandelin A."/>
            <person name="Schneider C."/>
            <person name="Schoenbach C."/>
            <person name="Sekiguchi K."/>
            <person name="Semple C.A."/>
            <person name="Seno S."/>
            <person name="Sessa L."/>
            <person name="Sheng Y."/>
            <person name="Shibata Y."/>
            <person name="Shimada H."/>
            <person name="Shimada K."/>
            <person name="Silva D."/>
            <person name="Sinclair B."/>
            <person name="Sperling S."/>
            <person name="Stupka E."/>
            <person name="Sugiura K."/>
            <person name="Sultana R."/>
            <person name="Takenaka Y."/>
            <person name="Taki K."/>
            <person name="Tammoja K."/>
            <person name="Tan S.L."/>
            <person name="Tang S."/>
            <person name="Taylor M.S."/>
            <person name="Tegner J."/>
            <person name="Teichmann S.A."/>
            <person name="Ueda H.R."/>
            <person name="van Nimwegen E."/>
            <person name="Verardo R."/>
            <person name="Wei C.L."/>
            <person name="Yagi K."/>
            <person name="Yamanishi H."/>
            <person name="Zabarovsky E."/>
            <person name="Zhu S."/>
            <person name="Zimmer A."/>
            <person name="Hide W."/>
            <person name="Bult C."/>
            <person name="Grimmond S.M."/>
            <person name="Teasdale R.D."/>
            <person name="Liu E.T."/>
            <person name="Brusic V."/>
            <person name="Quackenbush J."/>
            <person name="Wahlestedt C."/>
            <person name="Mattick J.S."/>
            <person name="Hume D.A."/>
            <person name="Kai C."/>
            <person name="Sasaki D."/>
            <person name="Tomaru Y."/>
            <person name="Fukuda S."/>
            <person name="Kanamori-Katayama M."/>
            <person name="Suzuki M."/>
            <person name="Aoki J."/>
            <person name="Arakawa T."/>
            <person name="Iida J."/>
            <person name="Imamura K."/>
            <person name="Itoh M."/>
            <person name="Kato T."/>
            <person name="Kawaji H."/>
            <person name="Kawagashira N."/>
            <person name="Kawashima T."/>
            <person name="Kojima M."/>
            <person name="Kondo S."/>
            <person name="Konno H."/>
            <person name="Nakano K."/>
            <person name="Ninomiya N."/>
            <person name="Nishio T."/>
            <person name="Okada M."/>
            <person name="Plessy C."/>
            <person name="Shibata K."/>
            <person name="Shiraki T."/>
            <person name="Suzuki S."/>
            <person name="Tagami M."/>
            <person name="Waki K."/>
            <person name="Watahiki A."/>
            <person name="Okamura-Oho Y."/>
            <person name="Suzuki H."/>
            <person name="Kawai J."/>
            <person name="Hayashizaki Y."/>
        </authorList>
    </citation>
    <scope>NUCLEOTIDE SEQUENCE [LARGE SCALE MRNA] (ISOFORM 2)</scope>
    <source>
        <strain>C57BL/6J</strain>
        <tissue>Cecum</tissue>
        <tissue>Embryo</tissue>
    </source>
</reference>
<reference key="3">
    <citation type="journal article" date="2004" name="Genome Res.">
        <title>The status, quality, and expansion of the NIH full-length cDNA project: the Mammalian Gene Collection (MGC).</title>
        <authorList>
            <consortium name="The MGC Project Team"/>
        </authorList>
    </citation>
    <scope>NUCLEOTIDE SEQUENCE [LARGE SCALE MRNA] (ISOFORMS 1; 2 AND 3)</scope>
    <source>
        <tissue>Colon</tissue>
    </source>
</reference>